<organism>
    <name type="scientific">Ralstonia nicotianae (strain ATCC BAA-1114 / GMI1000)</name>
    <name type="common">Ralstonia solanacearum</name>
    <dbReference type="NCBI Taxonomy" id="267608"/>
    <lineage>
        <taxon>Bacteria</taxon>
        <taxon>Pseudomonadati</taxon>
        <taxon>Pseudomonadota</taxon>
        <taxon>Betaproteobacteria</taxon>
        <taxon>Burkholderiales</taxon>
        <taxon>Burkholderiaceae</taxon>
        <taxon>Ralstonia</taxon>
        <taxon>Ralstonia solanacearum species complex</taxon>
    </lineage>
</organism>
<protein>
    <recommendedName>
        <fullName evidence="1">Protein nucleotidyltransferase YdiU</fullName>
        <ecNumber evidence="1">2.7.7.-</ecNumber>
    </recommendedName>
    <alternativeName>
        <fullName evidence="1">Protein adenylyltransferase YdiU</fullName>
        <ecNumber evidence="1">2.7.7.108</ecNumber>
    </alternativeName>
    <alternativeName>
        <fullName evidence="1">Protein uridylyltransferase YdiU</fullName>
        <ecNumber evidence="1">2.7.7.-</ecNumber>
    </alternativeName>
</protein>
<feature type="chain" id="PRO_0000121423" description="Protein nucleotidyltransferase YdiU">
    <location>
        <begin position="1"/>
        <end position="525"/>
    </location>
</feature>
<feature type="active site" description="Proton acceptor" evidence="1">
    <location>
        <position position="268"/>
    </location>
</feature>
<feature type="binding site" evidence="1">
    <location>
        <position position="107"/>
    </location>
    <ligand>
        <name>ATP</name>
        <dbReference type="ChEBI" id="CHEBI:30616"/>
    </ligand>
</feature>
<feature type="binding site" evidence="1">
    <location>
        <position position="109"/>
    </location>
    <ligand>
        <name>ATP</name>
        <dbReference type="ChEBI" id="CHEBI:30616"/>
    </ligand>
</feature>
<feature type="binding site" evidence="1">
    <location>
        <position position="110"/>
    </location>
    <ligand>
        <name>ATP</name>
        <dbReference type="ChEBI" id="CHEBI:30616"/>
    </ligand>
</feature>
<feature type="binding site" evidence="1">
    <location>
        <position position="129"/>
    </location>
    <ligand>
        <name>ATP</name>
        <dbReference type="ChEBI" id="CHEBI:30616"/>
    </ligand>
</feature>
<feature type="binding site" evidence="1">
    <location>
        <position position="141"/>
    </location>
    <ligand>
        <name>ATP</name>
        <dbReference type="ChEBI" id="CHEBI:30616"/>
    </ligand>
</feature>
<feature type="binding site" evidence="1">
    <location>
        <position position="142"/>
    </location>
    <ligand>
        <name>ATP</name>
        <dbReference type="ChEBI" id="CHEBI:30616"/>
    </ligand>
</feature>
<feature type="binding site" evidence="1">
    <location>
        <position position="192"/>
    </location>
    <ligand>
        <name>ATP</name>
        <dbReference type="ChEBI" id="CHEBI:30616"/>
    </ligand>
</feature>
<feature type="binding site" evidence="1">
    <location>
        <position position="199"/>
    </location>
    <ligand>
        <name>ATP</name>
        <dbReference type="ChEBI" id="CHEBI:30616"/>
    </ligand>
</feature>
<feature type="binding site" evidence="1">
    <location>
        <position position="269"/>
    </location>
    <ligand>
        <name>Mg(2+)</name>
        <dbReference type="ChEBI" id="CHEBI:18420"/>
    </ligand>
</feature>
<feature type="binding site" evidence="1">
    <location>
        <position position="278"/>
    </location>
    <ligand>
        <name>ATP</name>
        <dbReference type="ChEBI" id="CHEBI:30616"/>
    </ligand>
</feature>
<feature type="binding site" evidence="1">
    <location>
        <position position="278"/>
    </location>
    <ligand>
        <name>Mg(2+)</name>
        <dbReference type="ChEBI" id="CHEBI:18420"/>
    </ligand>
</feature>
<sequence>MPTSAAVQTDDSLASPFDWPGRPHAAPGFARLGERFLTRLPPVPMPAAPYLVGFSPEAAAPLGLSRAGLDTPAGLDVFVGNAIAAWSDPLATVYSGHQFGVWAGQLGDGRALLLAELQTADGPCEVQLKGAGLTPYSRMGDGRAVLRSSIREFLCSEAMAGLGIPTTRALCVIGADAPVRRETIETAAVVTRLAPSFVRFGHFEHFAANEKLPELRALADFVIDRFYPACRAEPQPYLALLREVGRRTAALIAQWQAVGFCHGVMNTDNMSILGLTLDYGPFGFLDGFDANHICNHSDTGGRYAYAQQPQIAYWNLFCLAQALLPLCGSDPTAFTDLSDEAQAQPAIDAAQEALLVYRDTYGEAFYARYRAKLGLTQAHDGDEALFGDLFKLLHTQRADYTLFFRHLADVRRDDTPAQAQARTVRDVFFDRDSADAWLAAYRQRLQTEPAPDAARAEAMRRVNPKYVLRNHLAEIAIRRAGEKDFSEVENLRAVLARPFDDHPGFEHYAGPAPDWAASLEVSCSS</sequence>
<dbReference type="EC" id="2.7.7.-" evidence="1"/>
<dbReference type="EC" id="2.7.7.108" evidence="1"/>
<dbReference type="EMBL" id="AL646052">
    <property type="protein sequence ID" value="CAD15450.1"/>
    <property type="molecule type" value="Genomic_DNA"/>
</dbReference>
<dbReference type="RefSeq" id="WP_011001686.1">
    <property type="nucleotide sequence ID" value="NC_003295.1"/>
</dbReference>
<dbReference type="SMR" id="Q8XYL0"/>
<dbReference type="STRING" id="267608.RSc1748"/>
<dbReference type="EnsemblBacteria" id="CAD15450">
    <property type="protein sequence ID" value="CAD15450"/>
    <property type="gene ID" value="RSc1748"/>
</dbReference>
<dbReference type="KEGG" id="rso:RSc1748"/>
<dbReference type="eggNOG" id="COG0397">
    <property type="taxonomic scope" value="Bacteria"/>
</dbReference>
<dbReference type="HOGENOM" id="CLU_010245_4_0_4"/>
<dbReference type="Proteomes" id="UP000001436">
    <property type="component" value="Chromosome"/>
</dbReference>
<dbReference type="GO" id="GO:0070733">
    <property type="term" value="F:AMPylase activity"/>
    <property type="evidence" value="ECO:0007669"/>
    <property type="project" value="TreeGrafter"/>
</dbReference>
<dbReference type="GO" id="GO:0005524">
    <property type="term" value="F:ATP binding"/>
    <property type="evidence" value="ECO:0007669"/>
    <property type="project" value="UniProtKB-UniRule"/>
</dbReference>
<dbReference type="GO" id="GO:0000287">
    <property type="term" value="F:magnesium ion binding"/>
    <property type="evidence" value="ECO:0007669"/>
    <property type="project" value="UniProtKB-UniRule"/>
</dbReference>
<dbReference type="HAMAP" id="MF_00692">
    <property type="entry name" value="YdiU_SelO"/>
    <property type="match status" value="1"/>
</dbReference>
<dbReference type="InterPro" id="IPR003846">
    <property type="entry name" value="SelO"/>
</dbReference>
<dbReference type="NCBIfam" id="NF000658">
    <property type="entry name" value="PRK00029.1"/>
    <property type="match status" value="1"/>
</dbReference>
<dbReference type="PANTHER" id="PTHR32057">
    <property type="entry name" value="PROTEIN ADENYLYLTRANSFERASE SELO, MITOCHONDRIAL"/>
    <property type="match status" value="1"/>
</dbReference>
<dbReference type="PANTHER" id="PTHR32057:SF14">
    <property type="entry name" value="PROTEIN ADENYLYLTRANSFERASE SELO, MITOCHONDRIAL"/>
    <property type="match status" value="1"/>
</dbReference>
<dbReference type="Pfam" id="PF02696">
    <property type="entry name" value="SelO"/>
    <property type="match status" value="1"/>
</dbReference>
<proteinExistence type="inferred from homology"/>
<accession>Q8XYL0</accession>
<evidence type="ECO:0000255" key="1">
    <source>
        <dbReference type="HAMAP-Rule" id="MF_00692"/>
    </source>
</evidence>
<comment type="function">
    <text evidence="1">Nucleotidyltransferase involved in the post-translational modification of proteins. It can catalyze the addition of adenosine monophosphate (AMP) or uridine monophosphate (UMP) to a protein, resulting in modifications known as AMPylation and UMPylation.</text>
</comment>
<comment type="catalytic activity">
    <reaction evidence="1">
        <text>L-seryl-[protein] + ATP = 3-O-(5'-adenylyl)-L-seryl-[protein] + diphosphate</text>
        <dbReference type="Rhea" id="RHEA:58120"/>
        <dbReference type="Rhea" id="RHEA-COMP:9863"/>
        <dbReference type="Rhea" id="RHEA-COMP:15073"/>
        <dbReference type="ChEBI" id="CHEBI:29999"/>
        <dbReference type="ChEBI" id="CHEBI:30616"/>
        <dbReference type="ChEBI" id="CHEBI:33019"/>
        <dbReference type="ChEBI" id="CHEBI:142516"/>
        <dbReference type="EC" id="2.7.7.108"/>
    </reaction>
</comment>
<comment type="catalytic activity">
    <reaction evidence="1">
        <text>L-threonyl-[protein] + ATP = 3-O-(5'-adenylyl)-L-threonyl-[protein] + diphosphate</text>
        <dbReference type="Rhea" id="RHEA:54292"/>
        <dbReference type="Rhea" id="RHEA-COMP:11060"/>
        <dbReference type="Rhea" id="RHEA-COMP:13847"/>
        <dbReference type="ChEBI" id="CHEBI:30013"/>
        <dbReference type="ChEBI" id="CHEBI:30616"/>
        <dbReference type="ChEBI" id="CHEBI:33019"/>
        <dbReference type="ChEBI" id="CHEBI:138113"/>
        <dbReference type="EC" id="2.7.7.108"/>
    </reaction>
</comment>
<comment type="catalytic activity">
    <reaction evidence="1">
        <text>L-tyrosyl-[protein] + ATP = O-(5'-adenylyl)-L-tyrosyl-[protein] + diphosphate</text>
        <dbReference type="Rhea" id="RHEA:54288"/>
        <dbReference type="Rhea" id="RHEA-COMP:10136"/>
        <dbReference type="Rhea" id="RHEA-COMP:13846"/>
        <dbReference type="ChEBI" id="CHEBI:30616"/>
        <dbReference type="ChEBI" id="CHEBI:33019"/>
        <dbReference type="ChEBI" id="CHEBI:46858"/>
        <dbReference type="ChEBI" id="CHEBI:83624"/>
        <dbReference type="EC" id="2.7.7.108"/>
    </reaction>
</comment>
<comment type="catalytic activity">
    <reaction evidence="1">
        <text>L-histidyl-[protein] + UTP = N(tele)-(5'-uridylyl)-L-histidyl-[protein] + diphosphate</text>
        <dbReference type="Rhea" id="RHEA:83891"/>
        <dbReference type="Rhea" id="RHEA-COMP:9745"/>
        <dbReference type="Rhea" id="RHEA-COMP:20239"/>
        <dbReference type="ChEBI" id="CHEBI:29979"/>
        <dbReference type="ChEBI" id="CHEBI:33019"/>
        <dbReference type="ChEBI" id="CHEBI:46398"/>
        <dbReference type="ChEBI" id="CHEBI:233474"/>
    </reaction>
</comment>
<comment type="catalytic activity">
    <reaction evidence="1">
        <text>L-seryl-[protein] + UTP = O-(5'-uridylyl)-L-seryl-[protein] + diphosphate</text>
        <dbReference type="Rhea" id="RHEA:64604"/>
        <dbReference type="Rhea" id="RHEA-COMP:9863"/>
        <dbReference type="Rhea" id="RHEA-COMP:16635"/>
        <dbReference type="ChEBI" id="CHEBI:29999"/>
        <dbReference type="ChEBI" id="CHEBI:33019"/>
        <dbReference type="ChEBI" id="CHEBI:46398"/>
        <dbReference type="ChEBI" id="CHEBI:156051"/>
    </reaction>
</comment>
<comment type="catalytic activity">
    <reaction evidence="1">
        <text>L-tyrosyl-[protein] + UTP = O-(5'-uridylyl)-L-tyrosyl-[protein] + diphosphate</text>
        <dbReference type="Rhea" id="RHEA:83887"/>
        <dbReference type="Rhea" id="RHEA-COMP:10136"/>
        <dbReference type="Rhea" id="RHEA-COMP:20238"/>
        <dbReference type="ChEBI" id="CHEBI:33019"/>
        <dbReference type="ChEBI" id="CHEBI:46398"/>
        <dbReference type="ChEBI" id="CHEBI:46858"/>
        <dbReference type="ChEBI" id="CHEBI:90602"/>
    </reaction>
</comment>
<comment type="cofactor">
    <cofactor evidence="1">
        <name>Mg(2+)</name>
        <dbReference type="ChEBI" id="CHEBI:18420"/>
    </cofactor>
    <cofactor evidence="1">
        <name>Mn(2+)</name>
        <dbReference type="ChEBI" id="CHEBI:29035"/>
    </cofactor>
</comment>
<comment type="similarity">
    <text evidence="1">Belongs to the SELO family.</text>
</comment>
<reference key="1">
    <citation type="journal article" date="2002" name="Nature">
        <title>Genome sequence of the plant pathogen Ralstonia solanacearum.</title>
        <authorList>
            <person name="Salanoubat M."/>
            <person name="Genin S."/>
            <person name="Artiguenave F."/>
            <person name="Gouzy J."/>
            <person name="Mangenot S."/>
            <person name="Arlat M."/>
            <person name="Billault A."/>
            <person name="Brottier P."/>
            <person name="Camus J.-C."/>
            <person name="Cattolico L."/>
            <person name="Chandler M."/>
            <person name="Choisne N."/>
            <person name="Claudel-Renard C."/>
            <person name="Cunnac S."/>
            <person name="Demange N."/>
            <person name="Gaspin C."/>
            <person name="Lavie M."/>
            <person name="Moisan A."/>
            <person name="Robert C."/>
            <person name="Saurin W."/>
            <person name="Schiex T."/>
            <person name="Siguier P."/>
            <person name="Thebault P."/>
            <person name="Whalen M."/>
            <person name="Wincker P."/>
            <person name="Levy M."/>
            <person name="Weissenbach J."/>
            <person name="Boucher C.A."/>
        </authorList>
    </citation>
    <scope>NUCLEOTIDE SEQUENCE [LARGE SCALE GENOMIC DNA]</scope>
    <source>
        <strain>ATCC BAA-1114 / GMI1000</strain>
    </source>
</reference>
<keyword id="KW-0067">ATP-binding</keyword>
<keyword id="KW-0460">Magnesium</keyword>
<keyword id="KW-0464">Manganese</keyword>
<keyword id="KW-0479">Metal-binding</keyword>
<keyword id="KW-0547">Nucleotide-binding</keyword>
<keyword id="KW-0548">Nucleotidyltransferase</keyword>
<keyword id="KW-1185">Reference proteome</keyword>
<keyword id="KW-0808">Transferase</keyword>
<gene>
    <name evidence="1" type="primary">ydiU</name>
    <name evidence="1" type="synonym">selO</name>
    <name type="ordered locus">RSc1748</name>
    <name type="ORF">RS02936</name>
</gene>
<name>SELO_RALN1</name>